<dbReference type="EMBL" id="D10468">
    <property type="protein sequence ID" value="BAA01261.1"/>
    <property type="status" value="ALT_INIT"/>
    <property type="molecule type" value="Genomic_DNA"/>
</dbReference>
<dbReference type="EMBL" id="D50624">
    <property type="protein sequence ID" value="BAA09301.1"/>
    <property type="molecule type" value="Genomic_DNA"/>
</dbReference>
<dbReference type="PIR" id="A41773">
    <property type="entry name" value="A41773"/>
</dbReference>
<dbReference type="RefSeq" id="WP_033225042.1">
    <property type="nucleotide sequence ID" value="NZ_CP107871.1"/>
</dbReference>
<dbReference type="SMR" id="P27309"/>
<dbReference type="GO" id="GO:0005829">
    <property type="term" value="C:cytosol"/>
    <property type="evidence" value="ECO:0007669"/>
    <property type="project" value="TreeGrafter"/>
</dbReference>
<dbReference type="GO" id="GO:0006353">
    <property type="term" value="P:DNA-templated transcription termination"/>
    <property type="evidence" value="ECO:0007669"/>
    <property type="project" value="UniProtKB-UniRule"/>
</dbReference>
<dbReference type="GO" id="GO:0032784">
    <property type="term" value="P:regulation of DNA-templated transcription elongation"/>
    <property type="evidence" value="ECO:0007669"/>
    <property type="project" value="InterPro"/>
</dbReference>
<dbReference type="GO" id="GO:0031564">
    <property type="term" value="P:transcription antitermination"/>
    <property type="evidence" value="ECO:0007669"/>
    <property type="project" value="UniProtKB-UniRule"/>
</dbReference>
<dbReference type="GO" id="GO:0140673">
    <property type="term" value="P:transcription elongation-coupled chromatin remodeling"/>
    <property type="evidence" value="ECO:0007669"/>
    <property type="project" value="InterPro"/>
</dbReference>
<dbReference type="CDD" id="cd06091">
    <property type="entry name" value="KOW_NusG"/>
    <property type="match status" value="1"/>
</dbReference>
<dbReference type="CDD" id="cd09891">
    <property type="entry name" value="NGN_Bact_1"/>
    <property type="match status" value="1"/>
</dbReference>
<dbReference type="FunFam" id="2.30.30.30:FF:000002">
    <property type="entry name" value="Transcription termination/antitermination factor NusG"/>
    <property type="match status" value="1"/>
</dbReference>
<dbReference type="FunFam" id="3.30.70.940:FF:000002">
    <property type="entry name" value="Transcription termination/antitermination protein NusG"/>
    <property type="match status" value="1"/>
</dbReference>
<dbReference type="Gene3D" id="2.30.30.30">
    <property type="match status" value="1"/>
</dbReference>
<dbReference type="Gene3D" id="3.30.70.940">
    <property type="entry name" value="NusG, N-terminal domain"/>
    <property type="match status" value="1"/>
</dbReference>
<dbReference type="HAMAP" id="MF_00948">
    <property type="entry name" value="NusG"/>
    <property type="match status" value="1"/>
</dbReference>
<dbReference type="InterPro" id="IPR005824">
    <property type="entry name" value="KOW"/>
</dbReference>
<dbReference type="InterPro" id="IPR047050">
    <property type="entry name" value="NGN"/>
</dbReference>
<dbReference type="InterPro" id="IPR006645">
    <property type="entry name" value="NGN-like_dom"/>
</dbReference>
<dbReference type="InterPro" id="IPR036735">
    <property type="entry name" value="NGN_dom_sf"/>
</dbReference>
<dbReference type="InterPro" id="IPR043425">
    <property type="entry name" value="NusG-like"/>
</dbReference>
<dbReference type="InterPro" id="IPR014722">
    <property type="entry name" value="Rib_uL2_dom2"/>
</dbReference>
<dbReference type="InterPro" id="IPR001062">
    <property type="entry name" value="Transcrpt_antiterm_NusG"/>
</dbReference>
<dbReference type="InterPro" id="IPR015869">
    <property type="entry name" value="Transcrpt_antiterm_NusG_bac_CS"/>
</dbReference>
<dbReference type="InterPro" id="IPR008991">
    <property type="entry name" value="Translation_prot_SH3-like_sf"/>
</dbReference>
<dbReference type="NCBIfam" id="TIGR00922">
    <property type="entry name" value="nusG"/>
    <property type="match status" value="1"/>
</dbReference>
<dbReference type="PANTHER" id="PTHR30265">
    <property type="entry name" value="RHO-INTERACTING TRANSCRIPTION TERMINATION FACTOR NUSG"/>
    <property type="match status" value="1"/>
</dbReference>
<dbReference type="PANTHER" id="PTHR30265:SF2">
    <property type="entry name" value="TRANSCRIPTION TERMINATION_ANTITERMINATION PROTEIN NUSG"/>
    <property type="match status" value="1"/>
</dbReference>
<dbReference type="Pfam" id="PF00467">
    <property type="entry name" value="KOW"/>
    <property type="match status" value="1"/>
</dbReference>
<dbReference type="Pfam" id="PF02357">
    <property type="entry name" value="NusG"/>
    <property type="match status" value="1"/>
</dbReference>
<dbReference type="PRINTS" id="PR00338">
    <property type="entry name" value="NUSGTNSCPFCT"/>
</dbReference>
<dbReference type="SMART" id="SM00739">
    <property type="entry name" value="KOW"/>
    <property type="match status" value="1"/>
</dbReference>
<dbReference type="SMART" id="SM00738">
    <property type="entry name" value="NGN"/>
    <property type="match status" value="1"/>
</dbReference>
<dbReference type="SUPFAM" id="SSF82679">
    <property type="entry name" value="N-utilization substance G protein NusG, N-terminal domain"/>
    <property type="match status" value="1"/>
</dbReference>
<dbReference type="SUPFAM" id="SSF50104">
    <property type="entry name" value="Translation proteins SH3-like domain"/>
    <property type="match status" value="1"/>
</dbReference>
<dbReference type="PROSITE" id="PS01014">
    <property type="entry name" value="NUSG"/>
    <property type="match status" value="1"/>
</dbReference>
<organism>
    <name type="scientific">Streptomyces virginiae</name>
    <name type="common">Streptomyces cinnamonensis</name>
    <dbReference type="NCBI Taxonomy" id="1961"/>
    <lineage>
        <taxon>Bacteria</taxon>
        <taxon>Bacillati</taxon>
        <taxon>Actinomycetota</taxon>
        <taxon>Actinomycetes</taxon>
        <taxon>Kitasatosporales</taxon>
        <taxon>Streptomycetaceae</taxon>
        <taxon>Streptomyces</taxon>
    </lineage>
</organism>
<evidence type="ECO:0000255" key="1">
    <source>
        <dbReference type="HAMAP-Rule" id="MF_00948"/>
    </source>
</evidence>
<evidence type="ECO:0000256" key="2">
    <source>
        <dbReference type="SAM" id="MobiDB-lite"/>
    </source>
</evidence>
<evidence type="ECO:0000305" key="3"/>
<comment type="function">
    <text evidence="1">Participates in transcription elongation, termination and antitermination.</text>
</comment>
<comment type="PTM">
    <text>The N-terminus is blocked.</text>
</comment>
<comment type="similarity">
    <text evidence="1">Belongs to the NusG family.</text>
</comment>
<comment type="sequence caution" evidence="3">
    <conflict type="erroneous initiation">
        <sequence resource="EMBL-CDS" id="BAA01261"/>
    </conflict>
</comment>
<feature type="chain" id="PRO_0000113963" description="Transcription termination/antitermination protein NusG">
    <location>
        <begin position="1"/>
        <end position="299"/>
    </location>
</feature>
<feature type="repeat" description="1">
    <location>
        <begin position="46"/>
        <end position="49"/>
    </location>
</feature>
<feature type="repeat" description="2">
    <location>
        <begin position="70"/>
        <end position="73"/>
    </location>
</feature>
<feature type="repeat" description="3; approximate">
    <location>
        <begin position="80"/>
        <end position="83"/>
    </location>
</feature>
<feature type="repeat" description="4">
    <location>
        <begin position="84"/>
        <end position="87"/>
    </location>
</feature>
<feature type="domain" description="KOW" evidence="1">
    <location>
        <begin position="248"/>
        <end position="276"/>
    </location>
</feature>
<feature type="region of interest" description="Disordered" evidence="2">
    <location>
        <begin position="30"/>
        <end position="96"/>
    </location>
</feature>
<feature type="region of interest" description="4 X 4 AA repeats of E-E-A-A">
    <location>
        <begin position="46"/>
        <end position="87"/>
    </location>
</feature>
<feature type="compositionally biased region" description="Acidic residues" evidence="2">
    <location>
        <begin position="54"/>
        <end position="87"/>
    </location>
</feature>
<name>NUSG_STRVG</name>
<gene>
    <name evidence="1" type="primary">nusG</name>
    <name type="synonym">vbrA</name>
</gene>
<keyword id="KW-0903">Direct protein sequencing</keyword>
<keyword id="KW-0677">Repeat</keyword>
<keyword id="KW-0804">Transcription</keyword>
<keyword id="KW-0889">Transcription antitermination</keyword>
<keyword id="KW-0805">Transcription regulation</keyword>
<keyword id="KW-0806">Transcription termination</keyword>
<proteinExistence type="evidence at protein level"/>
<sequence>MSDPNLNASHDSVESVEDELDIVEAADAVDPDEAELADAEAGAPAEEAALHVESDEDEDEADVEVDAAVEEAADDAEVAEEEAEEAAPVEPAEPVDPIQALREELRLLPGEWYVIHTYAGYEKRVKANLEQRAVSLNVEEFIYQAEVPEEEIVQIKNGERKNVRQNKLPGYVLVRMDLTNESWGVVRNTPGVTGFVGNAYDPYPLTLDEIVKMLAPEAQEKAAKAAAEEAGLPAPAVKRTIEVLDFEVGDSVTVTDGPFATLQATINEINPDSKKVKGLVEIFGRETPVELSFDQIQKN</sequence>
<protein>
    <recommendedName>
        <fullName evidence="1">Transcription termination/antitermination protein NusG</fullName>
    </recommendedName>
    <alternativeName>
        <fullName>Butanolide receptor</fullName>
    </alternativeName>
</protein>
<accession>P27309</accession>
<reference key="1">
    <citation type="journal article" date="1992" name="J. Biol. Chem.">
        <title>Purification and molecular cloning of a butyrolactone autoregulator receptor from Streptomyces virginiae.</title>
        <authorList>
            <person name="Okamoto S."/>
            <person name="Nihirra T."/>
            <person name="Kataoka H."/>
            <person name="Suzuki A."/>
            <person name="Yamada Y."/>
        </authorList>
    </citation>
    <scope>NUCLEOTIDE SEQUENCE [GENOMIC DNA]</scope>
    <scope>PARTIAL PROTEIN SEQUENCE</scope>
    <source>
        <strain>MAFF10-06014</strain>
    </source>
</reference>
<reference key="2">
    <citation type="journal article" date="1996" name="Gene">
        <title>Gene organization in the ada-rplL region of Streptomyces virginiae.</title>
        <authorList>
            <person name="Katayama M."/>
            <person name="Sakai Y."/>
            <person name="Okamoto S."/>
            <person name="Ihara F."/>
            <person name="Nihira T."/>
            <person name="Yamada Y."/>
        </authorList>
    </citation>
    <scope>NUCLEOTIDE SEQUENCE [GENOMIC DNA]</scope>
</reference>